<keyword id="KW-0238">DNA-binding</keyword>
<keyword id="KW-1017">Isopeptide bond</keyword>
<keyword id="KW-0479">Metal-binding</keyword>
<keyword id="KW-0539">Nucleus</keyword>
<keyword id="KW-0597">Phosphoprotein</keyword>
<keyword id="KW-1185">Reference proteome</keyword>
<keyword id="KW-0677">Repeat</keyword>
<keyword id="KW-0678">Repressor</keyword>
<keyword id="KW-0804">Transcription</keyword>
<keyword id="KW-0805">Transcription regulation</keyword>
<keyword id="KW-0832">Ubl conjugation</keyword>
<keyword id="KW-0862">Zinc</keyword>
<keyword id="KW-0863">Zinc-finger</keyword>
<sequence length="534" mass="61277">MAVESRAVSTPVPQNSQEQELILVKVEESRSWGQKLKQSGSARSCQELFRQQFRKFCYQETPGPREALGRLQELCYQWLRPELHTKEQILELLVLEQFLSILPEELQIWVQQHSPKNGEEAVTLLEDLEREFDDPGQQVPATPQGPPMPWKDLTCLGAAQEFTHIQRQPLKKQLKPWEPCLPPKSGCENNESAIKKDISGEKSQRLSQEPSFGGFSEHKSSLEWQQGSAPGETLRRSPSQRASFSPVIFTHKLLANRDHPEPQRNLILSTNSVTYQKVPTEERPYRCDICGHSFKQHSSLTQHQRIHTGEKPYKCNQCGKAFSLRSYLIIHQRIHSGEKAYECSECGKAFNQSSALIRHRKIHTGEKACKCNECGKAFSQSSYLIIHQRIHTGEKPYECNECGKTFSQSSKLIRHQRIHTGERPYECNECGKAFRQSSELITHQRIHSGEKPYECNECGKAFSLSSNLIRHQRIHSGEEPYQCNECGKTFKRSSALVQHQRIHSGEEAYICSECGKAFRHRSVLTRHQRVHTVK</sequence>
<accession>Q1LZ87</accession>
<dbReference type="EMBL" id="BC116143">
    <property type="protein sequence ID" value="AAI16144.1"/>
    <property type="molecule type" value="mRNA"/>
</dbReference>
<dbReference type="RefSeq" id="NP_001068730.1">
    <property type="nucleotide sequence ID" value="NM_001075262.1"/>
</dbReference>
<dbReference type="RefSeq" id="XP_005224020.1">
    <property type="nucleotide sequence ID" value="XM_005223963.5"/>
</dbReference>
<dbReference type="SMR" id="Q1LZ87"/>
<dbReference type="FunCoup" id="Q1LZ87">
    <property type="interactions" value="1389"/>
</dbReference>
<dbReference type="GeneID" id="506448"/>
<dbReference type="KEGG" id="bta:506448"/>
<dbReference type="CTD" id="84307"/>
<dbReference type="eggNOG" id="KOG1721">
    <property type="taxonomic scope" value="Eukaryota"/>
</dbReference>
<dbReference type="HOGENOM" id="CLU_002678_57_1_1"/>
<dbReference type="InParanoid" id="Q1LZ87"/>
<dbReference type="OrthoDB" id="1095242at2759"/>
<dbReference type="Proteomes" id="UP000009136">
    <property type="component" value="Unplaced"/>
</dbReference>
<dbReference type="GO" id="GO:0005634">
    <property type="term" value="C:nucleus"/>
    <property type="evidence" value="ECO:0007669"/>
    <property type="project" value="UniProtKB-SubCell"/>
</dbReference>
<dbReference type="GO" id="GO:0000981">
    <property type="term" value="F:DNA-binding transcription factor activity, RNA polymerase II-specific"/>
    <property type="evidence" value="ECO:0000318"/>
    <property type="project" value="GO_Central"/>
</dbReference>
<dbReference type="GO" id="GO:0000978">
    <property type="term" value="F:RNA polymerase II cis-regulatory region sequence-specific DNA binding"/>
    <property type="evidence" value="ECO:0000318"/>
    <property type="project" value="GO_Central"/>
</dbReference>
<dbReference type="GO" id="GO:0008270">
    <property type="term" value="F:zinc ion binding"/>
    <property type="evidence" value="ECO:0007669"/>
    <property type="project" value="UniProtKB-KW"/>
</dbReference>
<dbReference type="GO" id="GO:0006357">
    <property type="term" value="P:regulation of transcription by RNA polymerase II"/>
    <property type="evidence" value="ECO:0000318"/>
    <property type="project" value="GO_Central"/>
</dbReference>
<dbReference type="CDD" id="cd07936">
    <property type="entry name" value="SCAN"/>
    <property type="match status" value="1"/>
</dbReference>
<dbReference type="FunFam" id="3.30.160.60:FF:004137">
    <property type="match status" value="1"/>
</dbReference>
<dbReference type="FunFam" id="3.30.160.60:FF:000944">
    <property type="entry name" value="zinc finger protein 232 isoform X1"/>
    <property type="match status" value="1"/>
</dbReference>
<dbReference type="FunFam" id="3.30.160.60:FF:000622">
    <property type="entry name" value="zinc finger protein 26 isoform X3"/>
    <property type="match status" value="1"/>
</dbReference>
<dbReference type="FunFam" id="1.10.4020.10:FF:000001">
    <property type="entry name" value="zinc finger protein 263 isoform X1"/>
    <property type="match status" value="1"/>
</dbReference>
<dbReference type="FunFam" id="3.30.160.60:FF:002402">
    <property type="entry name" value="Zinc finger protein 347"/>
    <property type="match status" value="1"/>
</dbReference>
<dbReference type="FunFam" id="3.30.160.60:FF:001467">
    <property type="entry name" value="Zinc finger protein 397"/>
    <property type="match status" value="1"/>
</dbReference>
<dbReference type="FunFam" id="3.30.160.60:FF:001161">
    <property type="entry name" value="zinc finger protein 397 isoform X2"/>
    <property type="match status" value="1"/>
</dbReference>
<dbReference type="FunFam" id="3.30.160.60:FF:001498">
    <property type="entry name" value="Zinc finger protein 404"/>
    <property type="match status" value="1"/>
</dbReference>
<dbReference type="FunFam" id="3.30.160.60:FF:000737">
    <property type="entry name" value="Zinc finger protein 565"/>
    <property type="match status" value="1"/>
</dbReference>
<dbReference type="FunFam" id="3.30.160.60:FF:002134">
    <property type="entry name" value="Zinc finger protein 616"/>
    <property type="match status" value="1"/>
</dbReference>
<dbReference type="FunFam" id="3.30.160.60:FF:000229">
    <property type="entry name" value="Zinc finger protein 90 homolog"/>
    <property type="match status" value="1"/>
</dbReference>
<dbReference type="Gene3D" id="3.30.160.60">
    <property type="entry name" value="Classic Zinc Finger"/>
    <property type="match status" value="9"/>
</dbReference>
<dbReference type="Gene3D" id="1.10.4020.10">
    <property type="entry name" value="DNA breaking-rejoining enzymes"/>
    <property type="match status" value="1"/>
</dbReference>
<dbReference type="InterPro" id="IPR003309">
    <property type="entry name" value="SCAN_dom"/>
</dbReference>
<dbReference type="InterPro" id="IPR038269">
    <property type="entry name" value="SCAN_sf"/>
</dbReference>
<dbReference type="InterPro" id="IPR036236">
    <property type="entry name" value="Znf_C2H2_sf"/>
</dbReference>
<dbReference type="InterPro" id="IPR013087">
    <property type="entry name" value="Znf_C2H2_type"/>
</dbReference>
<dbReference type="PANTHER" id="PTHR24381">
    <property type="entry name" value="ZINC FINGER PROTEIN"/>
    <property type="match status" value="1"/>
</dbReference>
<dbReference type="PANTHER" id="PTHR24381:SF390">
    <property type="entry name" value="ZINC FINGER PROTEIN 37 HOMOLOG"/>
    <property type="match status" value="1"/>
</dbReference>
<dbReference type="Pfam" id="PF02023">
    <property type="entry name" value="SCAN"/>
    <property type="match status" value="1"/>
</dbReference>
<dbReference type="Pfam" id="PF00096">
    <property type="entry name" value="zf-C2H2"/>
    <property type="match status" value="9"/>
</dbReference>
<dbReference type="SMART" id="SM00431">
    <property type="entry name" value="SCAN"/>
    <property type="match status" value="1"/>
</dbReference>
<dbReference type="SMART" id="SM00355">
    <property type="entry name" value="ZnF_C2H2"/>
    <property type="match status" value="9"/>
</dbReference>
<dbReference type="SUPFAM" id="SSF57667">
    <property type="entry name" value="beta-beta-alpha zinc fingers"/>
    <property type="match status" value="5"/>
</dbReference>
<dbReference type="SUPFAM" id="SSF47353">
    <property type="entry name" value="Retrovirus capsid dimerization domain-like"/>
    <property type="match status" value="1"/>
</dbReference>
<dbReference type="PROSITE" id="PS50804">
    <property type="entry name" value="SCAN_BOX"/>
    <property type="match status" value="1"/>
</dbReference>
<dbReference type="PROSITE" id="PS00028">
    <property type="entry name" value="ZINC_FINGER_C2H2_1"/>
    <property type="match status" value="9"/>
</dbReference>
<dbReference type="PROSITE" id="PS50157">
    <property type="entry name" value="ZINC_FINGER_C2H2_2"/>
    <property type="match status" value="9"/>
</dbReference>
<gene>
    <name type="primary">ZNF397</name>
</gene>
<protein>
    <recommendedName>
        <fullName>Zinc finger protein 397</fullName>
    </recommendedName>
</protein>
<proteinExistence type="evidence at transcript level"/>
<name>ZN397_BOVIN</name>
<evidence type="ECO:0000250" key="1"/>
<evidence type="ECO:0000250" key="2">
    <source>
        <dbReference type="UniProtKB" id="Q8NF99"/>
    </source>
</evidence>
<evidence type="ECO:0000255" key="3">
    <source>
        <dbReference type="PROSITE-ProRule" id="PRU00042"/>
    </source>
</evidence>
<evidence type="ECO:0000255" key="4">
    <source>
        <dbReference type="PROSITE-ProRule" id="PRU00187"/>
    </source>
</evidence>
<evidence type="ECO:0000256" key="5">
    <source>
        <dbReference type="SAM" id="MobiDB-lite"/>
    </source>
</evidence>
<evidence type="ECO:0000305" key="6"/>
<feature type="chain" id="PRO_0000269561" description="Zinc finger protein 397">
    <location>
        <begin position="1"/>
        <end position="534"/>
    </location>
</feature>
<feature type="domain" description="SCAN box" evidence="4">
    <location>
        <begin position="50"/>
        <end position="132"/>
    </location>
</feature>
<feature type="zinc finger region" description="C2H2-type 1" evidence="3">
    <location>
        <begin position="285"/>
        <end position="307"/>
    </location>
</feature>
<feature type="zinc finger region" description="C2H2-type 2" evidence="3">
    <location>
        <begin position="313"/>
        <end position="335"/>
    </location>
</feature>
<feature type="zinc finger region" description="C2H2-type 3" evidence="3">
    <location>
        <begin position="341"/>
        <end position="363"/>
    </location>
</feature>
<feature type="zinc finger region" description="C2H2-type 4" evidence="3">
    <location>
        <begin position="369"/>
        <end position="391"/>
    </location>
</feature>
<feature type="zinc finger region" description="C2H2-type 5" evidence="3">
    <location>
        <begin position="397"/>
        <end position="419"/>
    </location>
</feature>
<feature type="zinc finger region" description="C2H2-type 6" evidence="3">
    <location>
        <begin position="425"/>
        <end position="447"/>
    </location>
</feature>
<feature type="zinc finger region" description="C2H2-type 7" evidence="3">
    <location>
        <begin position="453"/>
        <end position="475"/>
    </location>
</feature>
<feature type="zinc finger region" description="C2H2-type 8" evidence="3">
    <location>
        <begin position="481"/>
        <end position="503"/>
    </location>
</feature>
<feature type="zinc finger region" description="C2H2-type 9" evidence="3">
    <location>
        <begin position="509"/>
        <end position="531"/>
    </location>
</feature>
<feature type="region of interest" description="Disordered" evidence="5">
    <location>
        <begin position="197"/>
        <end position="242"/>
    </location>
</feature>
<feature type="modified residue" description="Phosphoserine" evidence="2">
    <location>
        <position position="31"/>
    </location>
</feature>
<feature type="cross-link" description="Glycyl lysine isopeptide (Lys-Gly) (interchain with G-Cter in SUMO2)" evidence="2">
    <location>
        <position position="55"/>
    </location>
</feature>
<feature type="cross-link" description="Glycyl lysine isopeptide (Lys-Gly) (interchain with G-Cter in SUMO2)" evidence="2">
    <location>
        <position position="171"/>
    </location>
</feature>
<feature type="cross-link" description="Glycyl lysine isopeptide (Lys-Gly) (interchain with G-Cter in SUMO2)" evidence="2">
    <location>
        <position position="202"/>
    </location>
</feature>
<feature type="cross-link" description="Glycyl lysine isopeptide (Lys-Gly) (interchain with G-Cter in SUMO2)" evidence="2">
    <location>
        <position position="252"/>
    </location>
</feature>
<reference key="1">
    <citation type="submission" date="2006-05" db="EMBL/GenBank/DDBJ databases">
        <authorList>
            <consortium name="NIH - Mammalian Gene Collection (MGC) project"/>
        </authorList>
    </citation>
    <scope>NUCLEOTIDE SEQUENCE [LARGE SCALE MRNA]</scope>
    <source>
        <strain>Hereford</strain>
        <tissue>Hippocampus</tissue>
    </source>
</reference>
<comment type="function">
    <text evidence="1">DNA-dependent transcriptional repressor.</text>
</comment>
<comment type="subcellular location">
    <subcellularLocation>
        <location evidence="4">Nucleus</location>
    </subcellularLocation>
</comment>
<comment type="similarity">
    <text evidence="6">Belongs to the krueppel C2H2-type zinc-finger protein family.</text>
</comment>
<organism>
    <name type="scientific">Bos taurus</name>
    <name type="common">Bovine</name>
    <dbReference type="NCBI Taxonomy" id="9913"/>
    <lineage>
        <taxon>Eukaryota</taxon>
        <taxon>Metazoa</taxon>
        <taxon>Chordata</taxon>
        <taxon>Craniata</taxon>
        <taxon>Vertebrata</taxon>
        <taxon>Euteleostomi</taxon>
        <taxon>Mammalia</taxon>
        <taxon>Eutheria</taxon>
        <taxon>Laurasiatheria</taxon>
        <taxon>Artiodactyla</taxon>
        <taxon>Ruminantia</taxon>
        <taxon>Pecora</taxon>
        <taxon>Bovidae</taxon>
        <taxon>Bovinae</taxon>
        <taxon>Bos</taxon>
    </lineage>
</organism>